<organism>
    <name type="scientific">Lactiplantibacillus plantarum (strain ATCC BAA-793 / NCIMB 8826 / WCFS1)</name>
    <name type="common">Lactobacillus plantarum</name>
    <dbReference type="NCBI Taxonomy" id="220668"/>
    <lineage>
        <taxon>Bacteria</taxon>
        <taxon>Bacillati</taxon>
        <taxon>Bacillota</taxon>
        <taxon>Bacilli</taxon>
        <taxon>Lactobacillales</taxon>
        <taxon>Lactobacillaceae</taxon>
        <taxon>Lactiplantibacillus</taxon>
    </lineage>
</organism>
<accession>Q88SE8</accession>
<accession>F9UUE8</accession>
<keyword id="KW-0067">ATP-binding</keyword>
<keyword id="KW-0119">Carbohydrate metabolism</keyword>
<keyword id="KW-0963">Cytoplasm</keyword>
<keyword id="KW-0299">Galactose metabolism</keyword>
<keyword id="KW-0418">Kinase</keyword>
<keyword id="KW-0460">Magnesium</keyword>
<keyword id="KW-0479">Metal-binding</keyword>
<keyword id="KW-0547">Nucleotide-binding</keyword>
<keyword id="KW-1185">Reference proteome</keyword>
<keyword id="KW-0808">Transferase</keyword>
<gene>
    <name evidence="1" type="primary">galK</name>
    <name type="ordered locus">lp_3482</name>
</gene>
<name>GAL1_LACPL</name>
<feature type="chain" id="PRO_0000184617" description="Galactokinase">
    <location>
        <begin position="1"/>
        <end position="387"/>
    </location>
</feature>
<feature type="active site" description="Proton acceptor" evidence="1">
    <location>
        <position position="174"/>
    </location>
</feature>
<feature type="binding site" evidence="1">
    <location>
        <begin position="33"/>
        <end position="36"/>
    </location>
    <ligand>
        <name>substrate</name>
    </ligand>
</feature>
<feature type="binding site" evidence="1">
    <location>
        <position position="67"/>
    </location>
    <ligand>
        <name>ATP</name>
        <dbReference type="ChEBI" id="CHEBI:30616"/>
    </ligand>
</feature>
<feature type="binding site" evidence="1">
    <location>
        <begin position="124"/>
        <end position="130"/>
    </location>
    <ligand>
        <name>ATP</name>
        <dbReference type="ChEBI" id="CHEBI:30616"/>
    </ligand>
</feature>
<feature type="binding site" evidence="1">
    <location>
        <position position="130"/>
    </location>
    <ligand>
        <name>Mg(2+)</name>
        <dbReference type="ChEBI" id="CHEBI:18420"/>
    </ligand>
</feature>
<feature type="binding site" evidence="1">
    <location>
        <position position="162"/>
    </location>
    <ligand>
        <name>Mg(2+)</name>
        <dbReference type="ChEBI" id="CHEBI:18420"/>
    </ligand>
</feature>
<feature type="binding site" evidence="1">
    <location>
        <position position="224"/>
    </location>
    <ligand>
        <name>substrate</name>
    </ligand>
</feature>
<feature type="site" description="Transition state stabilizer" evidence="1">
    <location>
        <position position="27"/>
    </location>
</feature>
<protein>
    <recommendedName>
        <fullName evidence="1">Galactokinase</fullName>
        <ecNumber evidence="1">2.7.1.6</ecNumber>
    </recommendedName>
    <alternativeName>
        <fullName evidence="1">Galactose kinase</fullName>
    </alternativeName>
</protein>
<sequence>MNTSDLKQEFTEAFDTKPERVFFSPGRINLIGEHTDYNGGHVFPCAITIGTYGVYAPRTDTTVRMYSANIPDAGIVTFDVNDLSYDKAAGWTNYPKGMMDEIAKTGVKFDHGFDFYVHGNMPDGAGLSSSASIELLTGIMLNTGFNLGISQLDLVKIGQKCENNYVGVNSGIMDQFAVGMGKKDQAILLDTNTMDYSYAPVKLGNNVIVIMNTNKRRELADSKYNERRSECEEALRRLQTKLDIKSLGDLTNDQFDEAAYLINDETLIKRARHAVFENQRAIRATKALADDDLTTFGELVTASHVSLHFDYEVTGKELDTLAETAWKQPGVLGARMTGAGFGGCGIAIVDKDQVDAFKENVGKVYRDTIGYDADFYIAEIADGPKEL</sequence>
<proteinExistence type="inferred from homology"/>
<evidence type="ECO:0000255" key="1">
    <source>
        <dbReference type="HAMAP-Rule" id="MF_00246"/>
    </source>
</evidence>
<comment type="function">
    <text evidence="1">Catalyzes the transfer of the gamma-phosphate of ATP to D-galactose to form alpha-D-galactose-1-phosphate (Gal-1-P).</text>
</comment>
<comment type="catalytic activity">
    <reaction evidence="1">
        <text>alpha-D-galactose + ATP = alpha-D-galactose 1-phosphate + ADP + H(+)</text>
        <dbReference type="Rhea" id="RHEA:13553"/>
        <dbReference type="ChEBI" id="CHEBI:15378"/>
        <dbReference type="ChEBI" id="CHEBI:28061"/>
        <dbReference type="ChEBI" id="CHEBI:30616"/>
        <dbReference type="ChEBI" id="CHEBI:58336"/>
        <dbReference type="ChEBI" id="CHEBI:456216"/>
        <dbReference type="EC" id="2.7.1.6"/>
    </reaction>
</comment>
<comment type="pathway">
    <text evidence="1">Carbohydrate metabolism; galactose metabolism.</text>
</comment>
<comment type="subcellular location">
    <subcellularLocation>
        <location evidence="1">Cytoplasm</location>
    </subcellularLocation>
</comment>
<comment type="similarity">
    <text evidence="1">Belongs to the GHMP kinase family. GalK subfamily.</text>
</comment>
<dbReference type="EC" id="2.7.1.6" evidence="1"/>
<dbReference type="EMBL" id="AL935263">
    <property type="protein sequence ID" value="CCC80450.1"/>
    <property type="molecule type" value="Genomic_DNA"/>
</dbReference>
<dbReference type="RefSeq" id="WP_003643061.1">
    <property type="nucleotide sequence ID" value="NC_004567.2"/>
</dbReference>
<dbReference type="RefSeq" id="YP_004890964.1">
    <property type="nucleotide sequence ID" value="NC_004567.2"/>
</dbReference>
<dbReference type="SMR" id="Q88SE8"/>
<dbReference type="STRING" id="220668.lp_3482"/>
<dbReference type="EnsemblBacteria" id="CCC80450">
    <property type="protein sequence ID" value="CCC80450"/>
    <property type="gene ID" value="lp_3482"/>
</dbReference>
<dbReference type="KEGG" id="lpl:lp_3482"/>
<dbReference type="PATRIC" id="fig|220668.9.peg.2898"/>
<dbReference type="eggNOG" id="COG0153">
    <property type="taxonomic scope" value="Bacteria"/>
</dbReference>
<dbReference type="HOGENOM" id="CLU_017814_2_1_9"/>
<dbReference type="OrthoDB" id="250531at2"/>
<dbReference type="PhylomeDB" id="Q88SE8"/>
<dbReference type="UniPathway" id="UPA00214"/>
<dbReference type="Proteomes" id="UP000000432">
    <property type="component" value="Chromosome"/>
</dbReference>
<dbReference type="GO" id="GO:0005829">
    <property type="term" value="C:cytosol"/>
    <property type="evidence" value="ECO:0007669"/>
    <property type="project" value="TreeGrafter"/>
</dbReference>
<dbReference type="GO" id="GO:0005524">
    <property type="term" value="F:ATP binding"/>
    <property type="evidence" value="ECO:0007669"/>
    <property type="project" value="UniProtKB-UniRule"/>
</dbReference>
<dbReference type="GO" id="GO:0004335">
    <property type="term" value="F:galactokinase activity"/>
    <property type="evidence" value="ECO:0007669"/>
    <property type="project" value="UniProtKB-UniRule"/>
</dbReference>
<dbReference type="GO" id="GO:0000287">
    <property type="term" value="F:magnesium ion binding"/>
    <property type="evidence" value="ECO:0007669"/>
    <property type="project" value="UniProtKB-UniRule"/>
</dbReference>
<dbReference type="GO" id="GO:0006012">
    <property type="term" value="P:galactose metabolic process"/>
    <property type="evidence" value="ECO:0007669"/>
    <property type="project" value="UniProtKB-UniRule"/>
</dbReference>
<dbReference type="FunFam" id="3.30.230.10:FF:000017">
    <property type="entry name" value="Galactokinase"/>
    <property type="match status" value="1"/>
</dbReference>
<dbReference type="FunFam" id="3.30.70.890:FF:000001">
    <property type="entry name" value="Galactokinase"/>
    <property type="match status" value="1"/>
</dbReference>
<dbReference type="Gene3D" id="3.30.230.10">
    <property type="match status" value="1"/>
</dbReference>
<dbReference type="Gene3D" id="3.30.70.890">
    <property type="entry name" value="GHMP kinase, C-terminal domain"/>
    <property type="match status" value="1"/>
</dbReference>
<dbReference type="HAMAP" id="MF_00246">
    <property type="entry name" value="Galactokinase"/>
    <property type="match status" value="1"/>
</dbReference>
<dbReference type="InterPro" id="IPR000705">
    <property type="entry name" value="Galactokinase"/>
</dbReference>
<dbReference type="InterPro" id="IPR022963">
    <property type="entry name" value="Galactokinase_bac"/>
</dbReference>
<dbReference type="InterPro" id="IPR019741">
    <property type="entry name" value="Galactokinase_CS"/>
</dbReference>
<dbReference type="InterPro" id="IPR019539">
    <property type="entry name" value="GalKase_N"/>
</dbReference>
<dbReference type="InterPro" id="IPR013750">
    <property type="entry name" value="GHMP_kinase_C_dom"/>
</dbReference>
<dbReference type="InterPro" id="IPR036554">
    <property type="entry name" value="GHMP_kinase_C_sf"/>
</dbReference>
<dbReference type="InterPro" id="IPR006204">
    <property type="entry name" value="GHMP_kinase_N_dom"/>
</dbReference>
<dbReference type="InterPro" id="IPR006203">
    <property type="entry name" value="GHMP_knse_ATP-bd_CS"/>
</dbReference>
<dbReference type="InterPro" id="IPR006206">
    <property type="entry name" value="Mevalonate/galactokinase"/>
</dbReference>
<dbReference type="InterPro" id="IPR020568">
    <property type="entry name" value="Ribosomal_Su5_D2-typ_SF"/>
</dbReference>
<dbReference type="InterPro" id="IPR014721">
    <property type="entry name" value="Ribsml_uS5_D2-typ_fold_subgr"/>
</dbReference>
<dbReference type="NCBIfam" id="TIGR00131">
    <property type="entry name" value="gal_kin"/>
    <property type="match status" value="1"/>
</dbReference>
<dbReference type="NCBIfam" id="NF003705">
    <property type="entry name" value="PRK05322.1"/>
    <property type="match status" value="1"/>
</dbReference>
<dbReference type="PANTHER" id="PTHR10457:SF7">
    <property type="entry name" value="GALACTOKINASE-RELATED"/>
    <property type="match status" value="1"/>
</dbReference>
<dbReference type="PANTHER" id="PTHR10457">
    <property type="entry name" value="MEVALONATE KINASE/GALACTOKINASE"/>
    <property type="match status" value="1"/>
</dbReference>
<dbReference type="Pfam" id="PF10509">
    <property type="entry name" value="GalKase_gal_bdg"/>
    <property type="match status" value="1"/>
</dbReference>
<dbReference type="Pfam" id="PF08544">
    <property type="entry name" value="GHMP_kinases_C"/>
    <property type="match status" value="1"/>
</dbReference>
<dbReference type="Pfam" id="PF00288">
    <property type="entry name" value="GHMP_kinases_N"/>
    <property type="match status" value="1"/>
</dbReference>
<dbReference type="PIRSF" id="PIRSF000530">
    <property type="entry name" value="Galactokinase"/>
    <property type="match status" value="1"/>
</dbReference>
<dbReference type="PRINTS" id="PR00473">
    <property type="entry name" value="GALCTOKINASE"/>
</dbReference>
<dbReference type="PRINTS" id="PR00959">
    <property type="entry name" value="MEVGALKINASE"/>
</dbReference>
<dbReference type="SUPFAM" id="SSF55060">
    <property type="entry name" value="GHMP Kinase, C-terminal domain"/>
    <property type="match status" value="1"/>
</dbReference>
<dbReference type="SUPFAM" id="SSF54211">
    <property type="entry name" value="Ribosomal protein S5 domain 2-like"/>
    <property type="match status" value="1"/>
</dbReference>
<dbReference type="PROSITE" id="PS00106">
    <property type="entry name" value="GALACTOKINASE"/>
    <property type="match status" value="1"/>
</dbReference>
<dbReference type="PROSITE" id="PS00627">
    <property type="entry name" value="GHMP_KINASES_ATP"/>
    <property type="match status" value="1"/>
</dbReference>
<reference key="1">
    <citation type="journal article" date="2003" name="Proc. Natl. Acad. Sci. U.S.A.">
        <title>Complete genome sequence of Lactobacillus plantarum WCFS1.</title>
        <authorList>
            <person name="Kleerebezem M."/>
            <person name="Boekhorst J."/>
            <person name="van Kranenburg R."/>
            <person name="Molenaar D."/>
            <person name="Kuipers O.P."/>
            <person name="Leer R."/>
            <person name="Tarchini R."/>
            <person name="Peters S.A."/>
            <person name="Sandbrink H.M."/>
            <person name="Fiers M.W.E.J."/>
            <person name="Stiekema W."/>
            <person name="Klein Lankhorst R.M."/>
            <person name="Bron P.A."/>
            <person name="Hoffer S.M."/>
            <person name="Nierop Groot M.N."/>
            <person name="Kerkhoven R."/>
            <person name="De Vries M."/>
            <person name="Ursing B."/>
            <person name="De Vos W.M."/>
            <person name="Siezen R.J."/>
        </authorList>
    </citation>
    <scope>NUCLEOTIDE SEQUENCE [LARGE SCALE GENOMIC DNA]</scope>
    <source>
        <strain>ATCC BAA-793 / NCIMB 8826 / WCFS1</strain>
    </source>
</reference>
<reference key="2">
    <citation type="journal article" date="2012" name="J. Bacteriol.">
        <title>Complete resequencing and reannotation of the Lactobacillus plantarum WCFS1 genome.</title>
        <authorList>
            <person name="Siezen R.J."/>
            <person name="Francke C."/>
            <person name="Renckens B."/>
            <person name="Boekhorst J."/>
            <person name="Wels M."/>
            <person name="Kleerebezem M."/>
            <person name="van Hijum S.A."/>
        </authorList>
    </citation>
    <scope>NUCLEOTIDE SEQUENCE [LARGE SCALE GENOMIC DNA]</scope>
    <scope>GENOME REANNOTATION</scope>
    <source>
        <strain>ATCC BAA-793 / NCIMB 8826 / WCFS1</strain>
    </source>
</reference>